<organism>
    <name type="scientific">Helicobacter pylori (strain G27)</name>
    <dbReference type="NCBI Taxonomy" id="563041"/>
    <lineage>
        <taxon>Bacteria</taxon>
        <taxon>Pseudomonadati</taxon>
        <taxon>Campylobacterota</taxon>
        <taxon>Epsilonproteobacteria</taxon>
        <taxon>Campylobacterales</taxon>
        <taxon>Helicobacteraceae</taxon>
        <taxon>Helicobacter</taxon>
    </lineage>
</organism>
<feature type="chain" id="PRO_1000134160" description="ATP synthase gamma chain">
    <location>
        <begin position="1"/>
        <end position="301"/>
    </location>
</feature>
<accession>B5Z8D1</accession>
<protein>
    <recommendedName>
        <fullName evidence="1">ATP synthase gamma chain</fullName>
    </recommendedName>
    <alternativeName>
        <fullName evidence="1">ATP synthase F1 sector gamma subunit</fullName>
    </alternativeName>
    <alternativeName>
        <fullName evidence="1">F-ATPase gamma subunit</fullName>
    </alternativeName>
</protein>
<keyword id="KW-0066">ATP synthesis</keyword>
<keyword id="KW-0997">Cell inner membrane</keyword>
<keyword id="KW-1003">Cell membrane</keyword>
<keyword id="KW-0139">CF(1)</keyword>
<keyword id="KW-0375">Hydrogen ion transport</keyword>
<keyword id="KW-0406">Ion transport</keyword>
<keyword id="KW-0472">Membrane</keyword>
<keyword id="KW-1185">Reference proteome</keyword>
<keyword id="KW-0813">Transport</keyword>
<reference key="1">
    <citation type="journal article" date="2009" name="J. Bacteriol.">
        <title>The complete genome sequence of Helicobacter pylori strain G27.</title>
        <authorList>
            <person name="Baltrus D.A."/>
            <person name="Amieva M.R."/>
            <person name="Covacci A."/>
            <person name="Lowe T.M."/>
            <person name="Merrell D.S."/>
            <person name="Ottemann K.M."/>
            <person name="Stein M."/>
            <person name="Salama N.R."/>
            <person name="Guillemin K."/>
        </authorList>
    </citation>
    <scope>NUCLEOTIDE SEQUENCE [LARGE SCALE GENOMIC DNA]</scope>
    <source>
        <strain>G27</strain>
    </source>
</reference>
<name>ATPG_HELPG</name>
<sequence>MANLRDIRKKIGSVKNTQKITHAMKLVSTSKLRKAEEVARNSRAYALKLDAVFDDVLSKMKNQGIEDIQSKYFRELERLEIKKVDIIFITADKGLCGGFNTNTIKKVLACTNEYKEKDIKVRLRGIGKKGNEYFSFNGIEVLDKINNLSSMPNYERAQEFMKKVVEDYLSGKTDKVIIIHNGFKNMITQEIRVKTILPIGYQIIHQNPQPSEAQETITSEPSGSEDEILDSLAEKYVEYSLYYALIDSLAAEHSARMQAMDTATNNAKDLVKTLTISYNKARQEAITTELVEINAGVEALK</sequence>
<gene>
    <name evidence="1" type="primary">atpG</name>
    <name type="ordered locus">HPG27_1078</name>
</gene>
<comment type="function">
    <text evidence="1">Produces ATP from ADP in the presence of a proton gradient across the membrane. The gamma chain is believed to be important in regulating ATPase activity and the flow of protons through the CF(0) complex.</text>
</comment>
<comment type="subunit">
    <text evidence="1">F-type ATPases have 2 components, CF(1) - the catalytic core - and CF(0) - the membrane proton channel. CF(1) has five subunits: alpha(3), beta(3), gamma(1), delta(1), epsilon(1). CF(0) has three main subunits: a, b and c.</text>
</comment>
<comment type="subcellular location">
    <subcellularLocation>
        <location evidence="1">Cell inner membrane</location>
        <topology evidence="1">Peripheral membrane protein</topology>
    </subcellularLocation>
</comment>
<comment type="similarity">
    <text evidence="1">Belongs to the ATPase gamma chain family.</text>
</comment>
<proteinExistence type="inferred from homology"/>
<dbReference type="EMBL" id="CP001173">
    <property type="protein sequence ID" value="ACI27830.1"/>
    <property type="molecule type" value="Genomic_DNA"/>
</dbReference>
<dbReference type="RefSeq" id="WP_000002187.1">
    <property type="nucleotide sequence ID" value="NC_011333.1"/>
</dbReference>
<dbReference type="SMR" id="B5Z8D1"/>
<dbReference type="KEGG" id="hpg:HPG27_1078"/>
<dbReference type="HOGENOM" id="CLU_050669_0_1_7"/>
<dbReference type="Proteomes" id="UP000001735">
    <property type="component" value="Chromosome"/>
</dbReference>
<dbReference type="GO" id="GO:0005886">
    <property type="term" value="C:plasma membrane"/>
    <property type="evidence" value="ECO:0007669"/>
    <property type="project" value="UniProtKB-SubCell"/>
</dbReference>
<dbReference type="GO" id="GO:0045259">
    <property type="term" value="C:proton-transporting ATP synthase complex"/>
    <property type="evidence" value="ECO:0007669"/>
    <property type="project" value="UniProtKB-KW"/>
</dbReference>
<dbReference type="GO" id="GO:0005524">
    <property type="term" value="F:ATP binding"/>
    <property type="evidence" value="ECO:0007669"/>
    <property type="project" value="UniProtKB-UniRule"/>
</dbReference>
<dbReference type="GO" id="GO:0046933">
    <property type="term" value="F:proton-transporting ATP synthase activity, rotational mechanism"/>
    <property type="evidence" value="ECO:0007669"/>
    <property type="project" value="UniProtKB-UniRule"/>
</dbReference>
<dbReference type="GO" id="GO:0042777">
    <property type="term" value="P:proton motive force-driven plasma membrane ATP synthesis"/>
    <property type="evidence" value="ECO:0007669"/>
    <property type="project" value="UniProtKB-UniRule"/>
</dbReference>
<dbReference type="CDD" id="cd12151">
    <property type="entry name" value="F1-ATPase_gamma"/>
    <property type="match status" value="1"/>
</dbReference>
<dbReference type="FunFam" id="1.10.287.80:FF:000007">
    <property type="entry name" value="ATP synthase gamma chain"/>
    <property type="match status" value="1"/>
</dbReference>
<dbReference type="FunFam" id="3.40.1380.10:FF:000006">
    <property type="entry name" value="ATP synthase gamma chain"/>
    <property type="match status" value="1"/>
</dbReference>
<dbReference type="Gene3D" id="3.40.1380.10">
    <property type="match status" value="1"/>
</dbReference>
<dbReference type="Gene3D" id="1.10.287.80">
    <property type="entry name" value="ATP synthase, gamma subunit, helix hairpin domain"/>
    <property type="match status" value="2"/>
</dbReference>
<dbReference type="HAMAP" id="MF_00815">
    <property type="entry name" value="ATP_synth_gamma_bact"/>
    <property type="match status" value="1"/>
</dbReference>
<dbReference type="InterPro" id="IPR035968">
    <property type="entry name" value="ATP_synth_F1_ATPase_gsu"/>
</dbReference>
<dbReference type="InterPro" id="IPR000131">
    <property type="entry name" value="ATP_synth_F1_gsu"/>
</dbReference>
<dbReference type="NCBIfam" id="TIGR01146">
    <property type="entry name" value="ATPsyn_F1gamma"/>
    <property type="match status" value="1"/>
</dbReference>
<dbReference type="PANTHER" id="PTHR11693">
    <property type="entry name" value="ATP SYNTHASE GAMMA CHAIN"/>
    <property type="match status" value="1"/>
</dbReference>
<dbReference type="PANTHER" id="PTHR11693:SF22">
    <property type="entry name" value="ATP SYNTHASE SUBUNIT GAMMA, MITOCHONDRIAL"/>
    <property type="match status" value="1"/>
</dbReference>
<dbReference type="Pfam" id="PF00231">
    <property type="entry name" value="ATP-synt"/>
    <property type="match status" value="1"/>
</dbReference>
<dbReference type="PRINTS" id="PR00126">
    <property type="entry name" value="ATPASEGAMMA"/>
</dbReference>
<dbReference type="SUPFAM" id="SSF52943">
    <property type="entry name" value="ATP synthase (F1-ATPase), gamma subunit"/>
    <property type="match status" value="1"/>
</dbReference>
<evidence type="ECO:0000255" key="1">
    <source>
        <dbReference type="HAMAP-Rule" id="MF_00815"/>
    </source>
</evidence>